<protein>
    <recommendedName>
        <fullName evidence="3">Receptor-like protein 5</fullName>
        <shortName evidence="3">AtRLP5</shortName>
    </recommendedName>
</protein>
<reference key="1">
    <citation type="journal article" date="2000" name="Nature">
        <title>Sequence and analysis of chromosome 1 of the plant Arabidopsis thaliana.</title>
        <authorList>
            <person name="Theologis A."/>
            <person name="Ecker J.R."/>
            <person name="Palm C.J."/>
            <person name="Federspiel N.A."/>
            <person name="Kaul S."/>
            <person name="White O."/>
            <person name="Alonso J."/>
            <person name="Altafi H."/>
            <person name="Araujo R."/>
            <person name="Bowman C.L."/>
            <person name="Brooks S.Y."/>
            <person name="Buehler E."/>
            <person name="Chan A."/>
            <person name="Chao Q."/>
            <person name="Chen H."/>
            <person name="Cheuk R.F."/>
            <person name="Chin C.W."/>
            <person name="Chung M.K."/>
            <person name="Conn L."/>
            <person name="Conway A.B."/>
            <person name="Conway A.R."/>
            <person name="Creasy T.H."/>
            <person name="Dewar K."/>
            <person name="Dunn P."/>
            <person name="Etgu P."/>
            <person name="Feldblyum T.V."/>
            <person name="Feng J.-D."/>
            <person name="Fong B."/>
            <person name="Fujii C.Y."/>
            <person name="Gill J.E."/>
            <person name="Goldsmith A.D."/>
            <person name="Haas B."/>
            <person name="Hansen N.F."/>
            <person name="Hughes B."/>
            <person name="Huizar L."/>
            <person name="Hunter J.L."/>
            <person name="Jenkins J."/>
            <person name="Johnson-Hopson C."/>
            <person name="Khan S."/>
            <person name="Khaykin E."/>
            <person name="Kim C.J."/>
            <person name="Koo H.L."/>
            <person name="Kremenetskaia I."/>
            <person name="Kurtz D.B."/>
            <person name="Kwan A."/>
            <person name="Lam B."/>
            <person name="Langin-Hooper S."/>
            <person name="Lee A."/>
            <person name="Lee J.M."/>
            <person name="Lenz C.A."/>
            <person name="Li J.H."/>
            <person name="Li Y.-P."/>
            <person name="Lin X."/>
            <person name="Liu S.X."/>
            <person name="Liu Z.A."/>
            <person name="Luros J.S."/>
            <person name="Maiti R."/>
            <person name="Marziali A."/>
            <person name="Militscher J."/>
            <person name="Miranda M."/>
            <person name="Nguyen M."/>
            <person name="Nierman W.C."/>
            <person name="Osborne B.I."/>
            <person name="Pai G."/>
            <person name="Peterson J."/>
            <person name="Pham P.K."/>
            <person name="Rizzo M."/>
            <person name="Rooney T."/>
            <person name="Rowley D."/>
            <person name="Sakano H."/>
            <person name="Salzberg S.L."/>
            <person name="Schwartz J.R."/>
            <person name="Shinn P."/>
            <person name="Southwick A.M."/>
            <person name="Sun H."/>
            <person name="Tallon L.J."/>
            <person name="Tambunga G."/>
            <person name="Toriumi M.J."/>
            <person name="Town C.D."/>
            <person name="Utterback T."/>
            <person name="Van Aken S."/>
            <person name="Vaysberg M."/>
            <person name="Vysotskaia V.S."/>
            <person name="Walker M."/>
            <person name="Wu D."/>
            <person name="Yu G."/>
            <person name="Fraser C.M."/>
            <person name="Venter J.C."/>
            <person name="Davis R.W."/>
        </authorList>
    </citation>
    <scope>NUCLEOTIDE SEQUENCE [LARGE SCALE GENOMIC DNA]</scope>
    <source>
        <strain>cv. Columbia</strain>
    </source>
</reference>
<reference key="2">
    <citation type="journal article" date="2017" name="Plant J.">
        <title>Araport11: a complete reannotation of the Arabidopsis thaliana reference genome.</title>
        <authorList>
            <person name="Cheng C.Y."/>
            <person name="Krishnakumar V."/>
            <person name="Chan A.P."/>
            <person name="Thibaud-Nissen F."/>
            <person name="Schobel S."/>
            <person name="Town C.D."/>
        </authorList>
    </citation>
    <scope>GENOME REANNOTATION</scope>
    <source>
        <strain>cv. Columbia</strain>
    </source>
</reference>
<reference key="3">
    <citation type="journal article" date="2008" name="Plant Physiol.">
        <title>A genome-wide functional investigation into the roles of receptor-like proteins in Arabidopsis.</title>
        <authorList>
            <person name="Wang G."/>
            <person name="Ellendorff U."/>
            <person name="Kemp B."/>
            <person name="Mansfield J.W."/>
            <person name="Forsyth A."/>
            <person name="Mitchell K."/>
            <person name="Bastas K."/>
            <person name="Liu C.-M."/>
            <person name="Woods-Toer A."/>
            <person name="Zipfel C."/>
            <person name="de Wit P.J.G.M."/>
            <person name="Jones J.D.G."/>
            <person name="Toer M."/>
            <person name="Thomma B.P.H.J."/>
        </authorList>
    </citation>
    <scope>GENE FAMILY</scope>
    <scope>NOMENCLATURE</scope>
</reference>
<evidence type="ECO:0000255" key="1"/>
<evidence type="ECO:0000255" key="2">
    <source>
        <dbReference type="PROSITE-ProRule" id="PRU00498"/>
    </source>
</evidence>
<evidence type="ECO:0000303" key="3">
    <source>
    </source>
</evidence>
<evidence type="ECO:0000305" key="4"/>
<evidence type="ECO:0000312" key="5">
    <source>
        <dbReference type="Araport" id="AT1G34290"/>
    </source>
</evidence>
<evidence type="ECO:0000312" key="6">
    <source>
        <dbReference type="EMBL" id="AAD39606.1"/>
    </source>
</evidence>
<gene>
    <name evidence="3" type="primary">RLP5</name>
    <name evidence="5" type="ordered locus">At1g34290</name>
    <name evidence="6" type="ORF">F23M19.6</name>
</gene>
<organism>
    <name type="scientific">Arabidopsis thaliana</name>
    <name type="common">Mouse-ear cress</name>
    <dbReference type="NCBI Taxonomy" id="3702"/>
    <lineage>
        <taxon>Eukaryota</taxon>
        <taxon>Viridiplantae</taxon>
        <taxon>Streptophyta</taxon>
        <taxon>Embryophyta</taxon>
        <taxon>Tracheophyta</taxon>
        <taxon>Spermatophyta</taxon>
        <taxon>Magnoliopsida</taxon>
        <taxon>eudicotyledons</taxon>
        <taxon>Gunneridae</taxon>
        <taxon>Pentapetalae</taxon>
        <taxon>rosids</taxon>
        <taxon>malvids</taxon>
        <taxon>Brassicales</taxon>
        <taxon>Brassicaceae</taxon>
        <taxon>Camelineae</taxon>
        <taxon>Arabidopsis</taxon>
    </lineage>
</organism>
<comment type="subcellular location">
    <subcellularLocation>
        <location evidence="4">Cell membrane</location>
        <topology evidence="4">Single-pass type I membrane protein</topology>
    </subcellularLocation>
</comment>
<comment type="similarity">
    <text evidence="4">Belongs to the RLP family.</text>
</comment>
<feature type="signal peptide" evidence="1">
    <location>
        <begin position="1"/>
        <end position="19"/>
    </location>
</feature>
<feature type="chain" id="PRO_5010511655" description="Receptor-like protein 5">
    <location>
        <begin position="20"/>
        <end position="266"/>
    </location>
</feature>
<feature type="topological domain" description="Extracellular" evidence="1">
    <location>
        <begin position="20"/>
        <end position="169"/>
    </location>
</feature>
<feature type="transmembrane region" description="Helical" evidence="1">
    <location>
        <begin position="170"/>
        <end position="190"/>
    </location>
</feature>
<feature type="topological domain" description="Cytoplasmic" evidence="1">
    <location>
        <begin position="191"/>
        <end position="266"/>
    </location>
</feature>
<feature type="repeat" description="LRR 1" evidence="1">
    <location>
        <begin position="93"/>
        <end position="117"/>
    </location>
</feature>
<feature type="repeat" description="LRR 2" evidence="1">
    <location>
        <begin position="119"/>
        <end position="143"/>
    </location>
</feature>
<feature type="glycosylation site" description="N-linked (GlcNAc...) asparagine" evidence="2">
    <location>
        <position position="119"/>
    </location>
</feature>
<keyword id="KW-1003">Cell membrane</keyword>
<keyword id="KW-0325">Glycoprotein</keyword>
<keyword id="KW-0433">Leucine-rich repeat</keyword>
<keyword id="KW-0472">Membrane</keyword>
<keyword id="KW-0675">Receptor</keyword>
<keyword id="KW-1185">Reference proteome</keyword>
<keyword id="KW-0677">Repeat</keyword>
<keyword id="KW-0732">Signal</keyword>
<keyword id="KW-0812">Transmembrane</keyword>
<keyword id="KW-1133">Transmembrane helix</keyword>
<name>RLP5_ARATH</name>
<proteinExistence type="inferred from homology"/>
<sequence>MINYRHIVFCLCVMVVVDSRLTPYLAAIEQVDPIVKIVLPIVGRFDPEEFVTSWQGNNPCEWFGTNCLEGIIIGISFISLNLIGTISPHFADLTSLRVIDLSHNRLKCTIPFEITKLKNLTIVDVSYNQLHGEVPRVRGIVILTERNPNIESTCLLVPSPTRNKNKPTVLVLLLGILVGLVVAGGASFGFYLYRIRKQPKRLQEPNEAVTLTQQQSSDESLVSDESYVISLQLQYRVLRRFSWVSKGPLLLTRQLKTNQNPHLPYM</sequence>
<dbReference type="EMBL" id="AC007454">
    <property type="protein sequence ID" value="AAD39606.1"/>
    <property type="molecule type" value="Genomic_DNA"/>
</dbReference>
<dbReference type="EMBL" id="CP002684">
    <property type="protein sequence ID" value="AEE31693.1"/>
    <property type="molecule type" value="Genomic_DNA"/>
</dbReference>
<dbReference type="PIR" id="A86467">
    <property type="entry name" value="A86467"/>
</dbReference>
<dbReference type="RefSeq" id="NP_174689.1">
    <property type="nucleotide sequence ID" value="NM_103151.1"/>
</dbReference>
<dbReference type="SMR" id="Q9XID2"/>
<dbReference type="STRING" id="3702.Q9XID2"/>
<dbReference type="GlyCosmos" id="Q9XID2">
    <property type="glycosylation" value="1 site, No reported glycans"/>
</dbReference>
<dbReference type="GlyGen" id="Q9XID2">
    <property type="glycosylation" value="1 site"/>
</dbReference>
<dbReference type="PaxDb" id="3702-AT1G34290.1"/>
<dbReference type="EnsemblPlants" id="AT1G34290.1">
    <property type="protein sequence ID" value="AT1G34290.1"/>
    <property type="gene ID" value="AT1G34290"/>
</dbReference>
<dbReference type="GeneID" id="840329"/>
<dbReference type="Gramene" id="AT1G34290.1">
    <property type="protein sequence ID" value="AT1G34290.1"/>
    <property type="gene ID" value="AT1G34290"/>
</dbReference>
<dbReference type="KEGG" id="ath:AT1G34290"/>
<dbReference type="Araport" id="AT1G34290"/>
<dbReference type="TAIR" id="AT1G34290">
    <property type="gene designation" value="RLP5"/>
</dbReference>
<dbReference type="eggNOG" id="KOG0619">
    <property type="taxonomic scope" value="Eukaryota"/>
</dbReference>
<dbReference type="HOGENOM" id="CLU_1047133_0_0_1"/>
<dbReference type="InParanoid" id="Q9XID2"/>
<dbReference type="OMA" id="PNIESTC"/>
<dbReference type="PhylomeDB" id="Q9XID2"/>
<dbReference type="PRO" id="PR:Q9XID2"/>
<dbReference type="Proteomes" id="UP000006548">
    <property type="component" value="Chromosome 1"/>
</dbReference>
<dbReference type="ExpressionAtlas" id="Q9XID2">
    <property type="expression patterns" value="differential"/>
</dbReference>
<dbReference type="GO" id="GO:0005886">
    <property type="term" value="C:plasma membrane"/>
    <property type="evidence" value="ECO:0007669"/>
    <property type="project" value="UniProtKB-SubCell"/>
</dbReference>
<dbReference type="FunFam" id="3.80.10.10:FF:000129">
    <property type="entry name" value="Leucine-rich repeat receptor-like kinase"/>
    <property type="match status" value="1"/>
</dbReference>
<dbReference type="Gene3D" id="3.80.10.10">
    <property type="entry name" value="Ribonuclease Inhibitor"/>
    <property type="match status" value="1"/>
</dbReference>
<dbReference type="InterPro" id="IPR052422">
    <property type="entry name" value="Auxin_Ser/Thr_Kinase"/>
</dbReference>
<dbReference type="InterPro" id="IPR001611">
    <property type="entry name" value="Leu-rich_rpt"/>
</dbReference>
<dbReference type="InterPro" id="IPR032675">
    <property type="entry name" value="LRR_dom_sf"/>
</dbReference>
<dbReference type="PANTHER" id="PTHR47986">
    <property type="entry name" value="OSJNBA0070M12.3 PROTEIN"/>
    <property type="match status" value="1"/>
</dbReference>
<dbReference type="PANTHER" id="PTHR47986:SF4">
    <property type="entry name" value="PROTEIN KINASE DOMAIN-CONTAINING PROTEIN"/>
    <property type="match status" value="1"/>
</dbReference>
<dbReference type="Pfam" id="PF13855">
    <property type="entry name" value="LRR_8"/>
    <property type="match status" value="1"/>
</dbReference>
<dbReference type="SUPFAM" id="SSF52058">
    <property type="entry name" value="L domain-like"/>
    <property type="match status" value="1"/>
</dbReference>
<accession>Q9XID2</accession>